<proteinExistence type="inferred from homology"/>
<reference key="1">
    <citation type="journal article" date="1991" name="J. Bacteriol.">
        <title>Nucleotide sequences of the Acinetobacter calcoaceticus benABC genes for benzoate 1,2-dioxygenase reveal evolutionary relationships among multicomponent oxygenases.</title>
        <authorList>
            <person name="Neidle E.L."/>
            <person name="Hartnett C."/>
            <person name="Ornston N.L."/>
            <person name="Bairoch A."/>
            <person name="Rekik M."/>
            <person name="Harayama S."/>
        </authorList>
    </citation>
    <scope>NUCLEOTIDE SEQUENCE [GENOMIC DNA]</scope>
</reference>
<reference key="2">
    <citation type="journal article" date="2004" name="Nucleic Acids Res.">
        <title>Unique features revealed by the genome sequence of Acinetobacter sp. ADP1, a versatile and naturally transformation competent bacterium.</title>
        <authorList>
            <person name="Barbe V."/>
            <person name="Vallenet D."/>
            <person name="Fonknechten N."/>
            <person name="Kreimeyer A."/>
            <person name="Oztas S."/>
            <person name="Labarre L."/>
            <person name="Cruveiller S."/>
            <person name="Robert C."/>
            <person name="Duprat S."/>
            <person name="Wincker P."/>
            <person name="Ornston L.N."/>
            <person name="Weissenbach J."/>
            <person name="Marliere P."/>
            <person name="Cohen G.N."/>
            <person name="Medigue C."/>
        </authorList>
    </citation>
    <scope>NUCLEOTIDE SEQUENCE [LARGE SCALE GENOMIC DNA]</scope>
    <source>
        <strain>ATCC 33305 / BD413 / ADP1</strain>
    </source>
</reference>
<feature type="chain" id="PRO_0000085065" description="Benzoate 1,2-dioxygenase subunit beta">
    <location>
        <begin position="1"/>
        <end position="169"/>
    </location>
</feature>
<dbReference type="EC" id="1.14.12.10"/>
<dbReference type="EMBL" id="AF009224">
    <property type="protein sequence ID" value="AAC46437.1"/>
    <property type="molecule type" value="Genomic_DNA"/>
</dbReference>
<dbReference type="EMBL" id="CR543861">
    <property type="protein sequence ID" value="CAG68301.1"/>
    <property type="molecule type" value="Genomic_DNA"/>
</dbReference>
<dbReference type="PIR" id="S23478">
    <property type="entry name" value="S23478"/>
</dbReference>
<dbReference type="RefSeq" id="WP_004925491.1">
    <property type="nucleotide sequence ID" value="NC_005966.1"/>
</dbReference>
<dbReference type="SMR" id="P07770"/>
<dbReference type="STRING" id="202950.GCA_001485005_01192"/>
<dbReference type="GeneID" id="45233850"/>
<dbReference type="KEGG" id="aci:ACIAD1437"/>
<dbReference type="eggNOG" id="COG5517">
    <property type="taxonomic scope" value="Bacteria"/>
</dbReference>
<dbReference type="HOGENOM" id="CLU_102527_0_1_6"/>
<dbReference type="OrthoDB" id="7446267at2"/>
<dbReference type="BioCyc" id="ASP62977:ACIAD_RS06640-MONOMER"/>
<dbReference type="UniPathway" id="UPA00156">
    <property type="reaction ID" value="UER00254"/>
</dbReference>
<dbReference type="Proteomes" id="UP000000430">
    <property type="component" value="Chromosome"/>
</dbReference>
<dbReference type="GO" id="GO:0018623">
    <property type="term" value="F:benzoate 1,2-dioxygenase activity"/>
    <property type="evidence" value="ECO:0007669"/>
    <property type="project" value="UniProtKB-EC"/>
</dbReference>
<dbReference type="GO" id="GO:0019380">
    <property type="term" value="P:3-phenylpropionate catabolic process"/>
    <property type="evidence" value="ECO:0007669"/>
    <property type="project" value="TreeGrafter"/>
</dbReference>
<dbReference type="GO" id="GO:0043640">
    <property type="term" value="P:benzoate catabolic process via hydroxylation"/>
    <property type="evidence" value="ECO:0007669"/>
    <property type="project" value="UniProtKB-UniPathway"/>
</dbReference>
<dbReference type="CDD" id="cd00667">
    <property type="entry name" value="ring_hydroxylating_dioxygenases_beta"/>
    <property type="match status" value="1"/>
</dbReference>
<dbReference type="Gene3D" id="3.10.450.50">
    <property type="match status" value="1"/>
</dbReference>
<dbReference type="InterPro" id="IPR017641">
    <property type="entry name" value="Benzo_1-2-diOase_ssu"/>
</dbReference>
<dbReference type="InterPro" id="IPR032710">
    <property type="entry name" value="NTF2-like_dom_sf"/>
</dbReference>
<dbReference type="InterPro" id="IPR000391">
    <property type="entry name" value="Rng_hydr_dOase-bsu"/>
</dbReference>
<dbReference type="NCBIfam" id="TIGR03232">
    <property type="entry name" value="benzo_1_2_benB"/>
    <property type="match status" value="1"/>
</dbReference>
<dbReference type="PANTHER" id="PTHR41534">
    <property type="entry name" value="BLR3401 PROTEIN"/>
    <property type="match status" value="1"/>
</dbReference>
<dbReference type="PANTHER" id="PTHR41534:SF1">
    <property type="entry name" value="BLR3401 PROTEIN"/>
    <property type="match status" value="1"/>
</dbReference>
<dbReference type="Pfam" id="PF00866">
    <property type="entry name" value="Ring_hydroxyl_B"/>
    <property type="match status" value="1"/>
</dbReference>
<dbReference type="SUPFAM" id="SSF54427">
    <property type="entry name" value="NTF2-like"/>
    <property type="match status" value="1"/>
</dbReference>
<evidence type="ECO:0000305" key="1"/>
<organism>
    <name type="scientific">Acinetobacter baylyi (strain ATCC 33305 / BD413 / ADP1)</name>
    <dbReference type="NCBI Taxonomy" id="62977"/>
    <lineage>
        <taxon>Bacteria</taxon>
        <taxon>Pseudomonadati</taxon>
        <taxon>Pseudomonadota</taxon>
        <taxon>Gammaproteobacteria</taxon>
        <taxon>Moraxellales</taxon>
        <taxon>Moraxellaceae</taxon>
        <taxon>Acinetobacter</taxon>
    </lineage>
</organism>
<gene>
    <name type="primary">benB</name>
    <name type="ordered locus">ACIAD1437</name>
</gene>
<protein>
    <recommendedName>
        <fullName>Benzoate 1,2-dioxygenase subunit beta</fullName>
        <ecNumber>1.14.12.10</ecNumber>
    </recommendedName>
</protein>
<comment type="function">
    <text>Degradation of benzoate to 2-hydro-1,2-dihydroxybenzoate (DHB). The beta subunit may be responsible for the substrate specificity of the enzyme.</text>
</comment>
<comment type="catalytic activity">
    <reaction>
        <text>benzoate + NADH + O2 + H(+) = (1R,6S)-1,6-dihydroxycyclohexa-2,4-diene-1-carboxylate + NAD(+)</text>
        <dbReference type="Rhea" id="RHEA:12633"/>
        <dbReference type="ChEBI" id="CHEBI:15378"/>
        <dbReference type="ChEBI" id="CHEBI:15379"/>
        <dbReference type="ChEBI" id="CHEBI:16150"/>
        <dbReference type="ChEBI" id="CHEBI:57540"/>
        <dbReference type="ChEBI" id="CHEBI:57945"/>
        <dbReference type="ChEBI" id="CHEBI:60129"/>
        <dbReference type="EC" id="1.14.12.10"/>
    </reaction>
</comment>
<comment type="pathway">
    <text>Aromatic compound metabolism; benzoate degradation via hydroxylation; catechol from benzoate: step 1/2.</text>
</comment>
<comment type="subunit">
    <text>This dioxygenase system consists of three proteins: the two subunits of the hydroxylase (BenA and BenB), and an electron transfer component (BenC).</text>
</comment>
<comment type="similarity">
    <text evidence="1">Belongs to the bacterial ring-hydroxylating dioxygenase beta subunit family.</text>
</comment>
<name>BENB_ACIAD</name>
<keyword id="KW-0058">Aromatic hydrocarbons catabolism</keyword>
<keyword id="KW-0223">Dioxygenase</keyword>
<keyword id="KW-0520">NAD</keyword>
<keyword id="KW-0560">Oxidoreductase</keyword>
<accession>P07770</accession>
<sequence>MNATALLDTISIEQISQFLYSEARFLDDEQWDDWLECYAPQASFWMPAWDDNDQLTENPQTEISLIYYPDRQGLEDRVFRIKTERSSATMPDTRTAHNISNIEVESRDGLQITVRFNWNTLSFRYKNSYSYFGMSRYVIDFSGEQPKILSKYVMLKNDYINQVIDIYHI</sequence>